<protein>
    <recommendedName>
        <fullName>Protein YIPF2</fullName>
    </recommendedName>
    <alternativeName>
        <fullName>YIP1 family member 2</fullName>
    </alternativeName>
</protein>
<keyword id="KW-0007">Acetylation</keyword>
<keyword id="KW-0967">Endosome</keyword>
<keyword id="KW-0333">Golgi apparatus</keyword>
<keyword id="KW-0472">Membrane</keyword>
<keyword id="KW-1185">Reference proteome</keyword>
<keyword id="KW-0812">Transmembrane</keyword>
<keyword id="KW-1133">Transmembrane helix</keyword>
<name>YIPF2_MOUSE</name>
<evidence type="ECO:0000250" key="1">
    <source>
        <dbReference type="UniProtKB" id="Q9BWQ6"/>
    </source>
</evidence>
<evidence type="ECO:0000255" key="2"/>
<evidence type="ECO:0000305" key="3"/>
<organism>
    <name type="scientific">Mus musculus</name>
    <name type="common">Mouse</name>
    <dbReference type="NCBI Taxonomy" id="10090"/>
    <lineage>
        <taxon>Eukaryota</taxon>
        <taxon>Metazoa</taxon>
        <taxon>Chordata</taxon>
        <taxon>Craniata</taxon>
        <taxon>Vertebrata</taxon>
        <taxon>Euteleostomi</taxon>
        <taxon>Mammalia</taxon>
        <taxon>Eutheria</taxon>
        <taxon>Euarchontoglires</taxon>
        <taxon>Glires</taxon>
        <taxon>Rodentia</taxon>
        <taxon>Myomorpha</taxon>
        <taxon>Muroidea</taxon>
        <taxon>Muridae</taxon>
        <taxon>Murinae</taxon>
        <taxon>Mus</taxon>
        <taxon>Mus</taxon>
    </lineage>
</organism>
<proteinExistence type="evidence at transcript level"/>
<dbReference type="EMBL" id="AK033705">
    <property type="protein sequence ID" value="BAC28437.1"/>
    <property type="molecule type" value="mRNA"/>
</dbReference>
<dbReference type="EMBL" id="AK133631">
    <property type="protein sequence ID" value="BAE21759.1"/>
    <property type="molecule type" value="mRNA"/>
</dbReference>
<dbReference type="EMBL" id="BC002282">
    <property type="protein sequence ID" value="AAH02282.1"/>
    <property type="molecule type" value="mRNA"/>
</dbReference>
<dbReference type="EMBL" id="BC003289">
    <property type="protein sequence ID" value="AAH03289.1"/>
    <property type="molecule type" value="mRNA"/>
</dbReference>
<dbReference type="CCDS" id="CCDS22907.1"/>
<dbReference type="RefSeq" id="NP_001192086.1">
    <property type="nucleotide sequence ID" value="NM_001205157.1"/>
</dbReference>
<dbReference type="RefSeq" id="NP_001192087.1">
    <property type="nucleotide sequence ID" value="NM_001205158.1"/>
</dbReference>
<dbReference type="RefSeq" id="NP_001346227.1">
    <property type="nucleotide sequence ID" value="NM_001359298.1"/>
</dbReference>
<dbReference type="RefSeq" id="NP_001346228.1">
    <property type="nucleotide sequence ID" value="NM_001359299.1"/>
</dbReference>
<dbReference type="RefSeq" id="NP_612176.1">
    <property type="nucleotide sequence ID" value="NM_138303.2"/>
</dbReference>
<dbReference type="RefSeq" id="XP_011240919.1">
    <property type="nucleotide sequence ID" value="XM_011242617.1"/>
</dbReference>
<dbReference type="RefSeq" id="XP_011240920.1">
    <property type="nucleotide sequence ID" value="XM_011242618.4"/>
</dbReference>
<dbReference type="RefSeq" id="XP_017169160.1">
    <property type="nucleotide sequence ID" value="XM_017313671.1"/>
</dbReference>
<dbReference type="FunCoup" id="Q99LP8">
    <property type="interactions" value="1972"/>
</dbReference>
<dbReference type="STRING" id="10090.ENSMUSP00000034700"/>
<dbReference type="GlyGen" id="Q99LP8">
    <property type="glycosylation" value="1 site"/>
</dbReference>
<dbReference type="iPTMnet" id="Q99LP8"/>
<dbReference type="PhosphoSitePlus" id="Q99LP8"/>
<dbReference type="PaxDb" id="10090-ENSMUSP00000034700"/>
<dbReference type="ProteomicsDB" id="299606"/>
<dbReference type="Antibodypedia" id="13058">
    <property type="antibodies" value="26 antibodies from 14 providers"/>
</dbReference>
<dbReference type="Ensembl" id="ENSMUST00000034700.15">
    <property type="protein sequence ID" value="ENSMUSP00000034700.8"/>
    <property type="gene ID" value="ENSMUSG00000032182.16"/>
</dbReference>
<dbReference type="Ensembl" id="ENSMUST00000078572.9">
    <property type="protein sequence ID" value="ENSMUSP00000077649.8"/>
    <property type="gene ID" value="ENSMUSG00000032182.16"/>
</dbReference>
<dbReference type="Ensembl" id="ENSMUST00000180365.9">
    <property type="protein sequence ID" value="ENSMUSP00000136463.2"/>
    <property type="gene ID" value="ENSMUSG00000032182.16"/>
</dbReference>
<dbReference type="GeneID" id="74766"/>
<dbReference type="KEGG" id="mmu:74766"/>
<dbReference type="UCSC" id="uc009olx.2">
    <property type="organism name" value="mouse"/>
</dbReference>
<dbReference type="AGR" id="MGI:1922016"/>
<dbReference type="CTD" id="78992"/>
<dbReference type="MGI" id="MGI:1922016">
    <property type="gene designation" value="Yipf2"/>
</dbReference>
<dbReference type="VEuPathDB" id="HostDB:ENSMUSG00000032182"/>
<dbReference type="eggNOG" id="KOG3114">
    <property type="taxonomic scope" value="Eukaryota"/>
</dbReference>
<dbReference type="GeneTree" id="ENSGT00390000010157"/>
<dbReference type="HOGENOM" id="CLU_059606_1_1_1"/>
<dbReference type="InParanoid" id="Q99LP8"/>
<dbReference type="OMA" id="PIWISVT"/>
<dbReference type="OrthoDB" id="10256463at2759"/>
<dbReference type="PhylomeDB" id="Q99LP8"/>
<dbReference type="TreeFam" id="TF313536"/>
<dbReference type="BioGRID-ORCS" id="74766">
    <property type="hits" value="1 hit in 78 CRISPR screens"/>
</dbReference>
<dbReference type="ChiTaRS" id="Yipf2">
    <property type="organism name" value="mouse"/>
</dbReference>
<dbReference type="PRO" id="PR:Q99LP8"/>
<dbReference type="Proteomes" id="UP000000589">
    <property type="component" value="Chromosome 9"/>
</dbReference>
<dbReference type="RNAct" id="Q99LP8">
    <property type="molecule type" value="protein"/>
</dbReference>
<dbReference type="Bgee" id="ENSMUSG00000032182">
    <property type="expression patterns" value="Expressed in rostral migratory stream and 245 other cell types or tissues"/>
</dbReference>
<dbReference type="ExpressionAtlas" id="Q99LP8">
    <property type="expression patterns" value="baseline and differential"/>
</dbReference>
<dbReference type="GO" id="GO:0005797">
    <property type="term" value="C:Golgi medial cisterna"/>
    <property type="evidence" value="ECO:0000250"/>
    <property type="project" value="UniProtKB"/>
</dbReference>
<dbReference type="GO" id="GO:0000138">
    <property type="term" value="C:Golgi trans cisterna"/>
    <property type="evidence" value="ECO:0000250"/>
    <property type="project" value="UniProtKB"/>
</dbReference>
<dbReference type="GO" id="GO:0031902">
    <property type="term" value="C:late endosome membrane"/>
    <property type="evidence" value="ECO:0007669"/>
    <property type="project" value="UniProtKB-SubCell"/>
</dbReference>
<dbReference type="GO" id="GO:0005802">
    <property type="term" value="C:trans-Golgi network"/>
    <property type="evidence" value="ECO:0000250"/>
    <property type="project" value="UniProtKB"/>
</dbReference>
<dbReference type="GO" id="GO:0030133">
    <property type="term" value="C:transport vesicle"/>
    <property type="evidence" value="ECO:0007669"/>
    <property type="project" value="Ensembl"/>
</dbReference>
<dbReference type="GO" id="GO:0031267">
    <property type="term" value="F:small GTPase binding"/>
    <property type="evidence" value="ECO:0007669"/>
    <property type="project" value="InterPro"/>
</dbReference>
<dbReference type="GO" id="GO:0016192">
    <property type="term" value="P:vesicle-mediated transport"/>
    <property type="evidence" value="ECO:0007669"/>
    <property type="project" value="InterPro"/>
</dbReference>
<dbReference type="InterPro" id="IPR006977">
    <property type="entry name" value="Yip1_dom"/>
</dbReference>
<dbReference type="InterPro" id="IPR039765">
    <property type="entry name" value="Yip5/YIPF1/YIPF2"/>
</dbReference>
<dbReference type="PANTHER" id="PTHR12822">
    <property type="entry name" value="PROTEIN YIPF"/>
    <property type="match status" value="1"/>
</dbReference>
<dbReference type="PANTHER" id="PTHR12822:SF3">
    <property type="entry name" value="PROTEIN YIPF2"/>
    <property type="match status" value="1"/>
</dbReference>
<dbReference type="Pfam" id="PF04893">
    <property type="entry name" value="Yip1"/>
    <property type="match status" value="1"/>
</dbReference>
<gene>
    <name type="primary">Yipf2</name>
</gene>
<reference key="1">
    <citation type="journal article" date="2005" name="Science">
        <title>The transcriptional landscape of the mammalian genome.</title>
        <authorList>
            <person name="Carninci P."/>
            <person name="Kasukawa T."/>
            <person name="Katayama S."/>
            <person name="Gough J."/>
            <person name="Frith M.C."/>
            <person name="Maeda N."/>
            <person name="Oyama R."/>
            <person name="Ravasi T."/>
            <person name="Lenhard B."/>
            <person name="Wells C."/>
            <person name="Kodzius R."/>
            <person name="Shimokawa K."/>
            <person name="Bajic V.B."/>
            <person name="Brenner S.E."/>
            <person name="Batalov S."/>
            <person name="Forrest A.R."/>
            <person name="Zavolan M."/>
            <person name="Davis M.J."/>
            <person name="Wilming L.G."/>
            <person name="Aidinis V."/>
            <person name="Allen J.E."/>
            <person name="Ambesi-Impiombato A."/>
            <person name="Apweiler R."/>
            <person name="Aturaliya R.N."/>
            <person name="Bailey T.L."/>
            <person name="Bansal M."/>
            <person name="Baxter L."/>
            <person name="Beisel K.W."/>
            <person name="Bersano T."/>
            <person name="Bono H."/>
            <person name="Chalk A.M."/>
            <person name="Chiu K.P."/>
            <person name="Choudhary V."/>
            <person name="Christoffels A."/>
            <person name="Clutterbuck D.R."/>
            <person name="Crowe M.L."/>
            <person name="Dalla E."/>
            <person name="Dalrymple B.P."/>
            <person name="de Bono B."/>
            <person name="Della Gatta G."/>
            <person name="di Bernardo D."/>
            <person name="Down T."/>
            <person name="Engstrom P."/>
            <person name="Fagiolini M."/>
            <person name="Faulkner G."/>
            <person name="Fletcher C.F."/>
            <person name="Fukushima T."/>
            <person name="Furuno M."/>
            <person name="Futaki S."/>
            <person name="Gariboldi M."/>
            <person name="Georgii-Hemming P."/>
            <person name="Gingeras T.R."/>
            <person name="Gojobori T."/>
            <person name="Green R.E."/>
            <person name="Gustincich S."/>
            <person name="Harbers M."/>
            <person name="Hayashi Y."/>
            <person name="Hensch T.K."/>
            <person name="Hirokawa N."/>
            <person name="Hill D."/>
            <person name="Huminiecki L."/>
            <person name="Iacono M."/>
            <person name="Ikeo K."/>
            <person name="Iwama A."/>
            <person name="Ishikawa T."/>
            <person name="Jakt M."/>
            <person name="Kanapin A."/>
            <person name="Katoh M."/>
            <person name="Kawasawa Y."/>
            <person name="Kelso J."/>
            <person name="Kitamura H."/>
            <person name="Kitano H."/>
            <person name="Kollias G."/>
            <person name="Krishnan S.P."/>
            <person name="Kruger A."/>
            <person name="Kummerfeld S.K."/>
            <person name="Kurochkin I.V."/>
            <person name="Lareau L.F."/>
            <person name="Lazarevic D."/>
            <person name="Lipovich L."/>
            <person name="Liu J."/>
            <person name="Liuni S."/>
            <person name="McWilliam S."/>
            <person name="Madan Babu M."/>
            <person name="Madera M."/>
            <person name="Marchionni L."/>
            <person name="Matsuda H."/>
            <person name="Matsuzawa S."/>
            <person name="Miki H."/>
            <person name="Mignone F."/>
            <person name="Miyake S."/>
            <person name="Morris K."/>
            <person name="Mottagui-Tabar S."/>
            <person name="Mulder N."/>
            <person name="Nakano N."/>
            <person name="Nakauchi H."/>
            <person name="Ng P."/>
            <person name="Nilsson R."/>
            <person name="Nishiguchi S."/>
            <person name="Nishikawa S."/>
            <person name="Nori F."/>
            <person name="Ohara O."/>
            <person name="Okazaki Y."/>
            <person name="Orlando V."/>
            <person name="Pang K.C."/>
            <person name="Pavan W.J."/>
            <person name="Pavesi G."/>
            <person name="Pesole G."/>
            <person name="Petrovsky N."/>
            <person name="Piazza S."/>
            <person name="Reed J."/>
            <person name="Reid J.F."/>
            <person name="Ring B.Z."/>
            <person name="Ringwald M."/>
            <person name="Rost B."/>
            <person name="Ruan Y."/>
            <person name="Salzberg S.L."/>
            <person name="Sandelin A."/>
            <person name="Schneider C."/>
            <person name="Schoenbach C."/>
            <person name="Sekiguchi K."/>
            <person name="Semple C.A."/>
            <person name="Seno S."/>
            <person name="Sessa L."/>
            <person name="Sheng Y."/>
            <person name="Shibata Y."/>
            <person name="Shimada H."/>
            <person name="Shimada K."/>
            <person name="Silva D."/>
            <person name="Sinclair B."/>
            <person name="Sperling S."/>
            <person name="Stupka E."/>
            <person name="Sugiura K."/>
            <person name="Sultana R."/>
            <person name="Takenaka Y."/>
            <person name="Taki K."/>
            <person name="Tammoja K."/>
            <person name="Tan S.L."/>
            <person name="Tang S."/>
            <person name="Taylor M.S."/>
            <person name="Tegner J."/>
            <person name="Teichmann S.A."/>
            <person name="Ueda H.R."/>
            <person name="van Nimwegen E."/>
            <person name="Verardo R."/>
            <person name="Wei C.L."/>
            <person name="Yagi K."/>
            <person name="Yamanishi H."/>
            <person name="Zabarovsky E."/>
            <person name="Zhu S."/>
            <person name="Zimmer A."/>
            <person name="Hide W."/>
            <person name="Bult C."/>
            <person name="Grimmond S.M."/>
            <person name="Teasdale R.D."/>
            <person name="Liu E.T."/>
            <person name="Brusic V."/>
            <person name="Quackenbush J."/>
            <person name="Wahlestedt C."/>
            <person name="Mattick J.S."/>
            <person name="Hume D.A."/>
            <person name="Kai C."/>
            <person name="Sasaki D."/>
            <person name="Tomaru Y."/>
            <person name="Fukuda S."/>
            <person name="Kanamori-Katayama M."/>
            <person name="Suzuki M."/>
            <person name="Aoki J."/>
            <person name="Arakawa T."/>
            <person name="Iida J."/>
            <person name="Imamura K."/>
            <person name="Itoh M."/>
            <person name="Kato T."/>
            <person name="Kawaji H."/>
            <person name="Kawagashira N."/>
            <person name="Kawashima T."/>
            <person name="Kojima M."/>
            <person name="Kondo S."/>
            <person name="Konno H."/>
            <person name="Nakano K."/>
            <person name="Ninomiya N."/>
            <person name="Nishio T."/>
            <person name="Okada M."/>
            <person name="Plessy C."/>
            <person name="Shibata K."/>
            <person name="Shiraki T."/>
            <person name="Suzuki S."/>
            <person name="Tagami M."/>
            <person name="Waki K."/>
            <person name="Watahiki A."/>
            <person name="Okamura-Oho Y."/>
            <person name="Suzuki H."/>
            <person name="Kawai J."/>
            <person name="Hayashizaki Y."/>
        </authorList>
    </citation>
    <scope>NUCLEOTIDE SEQUENCE [LARGE SCALE MRNA]</scope>
    <source>
        <strain>C57BL/6J</strain>
        <tissue>Cecum</tissue>
        <tissue>Pituitary</tissue>
    </source>
</reference>
<reference key="2">
    <citation type="journal article" date="2004" name="Genome Res.">
        <title>The status, quality, and expansion of the NIH full-length cDNA project: the Mammalian Gene Collection (MGC).</title>
        <authorList>
            <consortium name="The MGC Project Team"/>
        </authorList>
    </citation>
    <scope>NUCLEOTIDE SEQUENCE [LARGE SCALE MRNA]</scope>
    <source>
        <tissue>Mammary tumor</tissue>
    </source>
</reference>
<comment type="subunit">
    <text evidence="1">Interacts with YIPF6; this interaction may stabilize YIPF2. May also form a ternary complex with YIPF1 and YIPF6.</text>
</comment>
<comment type="subcellular location">
    <subcellularLocation>
        <location evidence="1">Golgi apparatus</location>
        <location evidence="1">cis-Golgi network membrane</location>
        <topology evidence="1">Multi-pass membrane protein</topology>
    </subcellularLocation>
    <subcellularLocation>
        <location evidence="1">Golgi apparatus</location>
        <location evidence="1">trans-Golgi network membrane</location>
    </subcellularLocation>
    <subcellularLocation>
        <location evidence="1">Late endosome membrane</location>
    </subcellularLocation>
    <text evidence="1">Mainly localizes within medial-/trans-Golgi and trans-Golgi network (TGN), while less so within cis-Golgi.</text>
</comment>
<comment type="similarity">
    <text evidence="3">Belongs to the YIP1 family.</text>
</comment>
<feature type="initiator methionine" description="Removed" evidence="1">
    <location>
        <position position="1"/>
    </location>
</feature>
<feature type="chain" id="PRO_0000241455" description="Protein YIPF2">
    <location>
        <begin position="2"/>
        <end position="312"/>
    </location>
</feature>
<feature type="topological domain" description="Cytoplasmic" evidence="1">
    <location>
        <begin position="2"/>
        <end position="121"/>
    </location>
</feature>
<feature type="transmembrane region" description="Helical" evidence="2">
    <location>
        <begin position="122"/>
        <end position="142"/>
    </location>
</feature>
<feature type="topological domain" description="Lumenal" evidence="3">
    <location>
        <begin position="143"/>
        <end position="160"/>
    </location>
</feature>
<feature type="transmembrane region" description="Helical" evidence="2">
    <location>
        <begin position="161"/>
        <end position="181"/>
    </location>
</feature>
<feature type="topological domain" description="Cytoplasmic" evidence="3">
    <location>
        <begin position="182"/>
        <end position="193"/>
    </location>
</feature>
<feature type="transmembrane region" description="Helical" evidence="2">
    <location>
        <begin position="194"/>
        <end position="216"/>
    </location>
</feature>
<feature type="topological domain" description="Lumenal" evidence="3">
    <location>
        <begin position="217"/>
        <end position="228"/>
    </location>
</feature>
<feature type="transmembrane region" description="Helical" evidence="2">
    <location>
        <begin position="229"/>
        <end position="249"/>
    </location>
</feature>
<feature type="topological domain" description="Cytoplasmic" evidence="3">
    <location>
        <begin position="250"/>
        <end position="253"/>
    </location>
</feature>
<feature type="transmembrane region" description="Helical" evidence="2">
    <location>
        <begin position="254"/>
        <end position="274"/>
    </location>
</feature>
<feature type="topological domain" description="Lumenal" evidence="1">
    <location>
        <begin position="275"/>
        <end position="312"/>
    </location>
</feature>
<feature type="modified residue" description="N-acetylalanine" evidence="1">
    <location>
        <position position="2"/>
    </location>
</feature>
<feature type="sequence conflict" description="In Ref. 2; AAH03289." evidence="3" ref="2">
    <original>L</original>
    <variation>F</variation>
    <location>
        <position position="227"/>
    </location>
</feature>
<sequence length="312" mass="34900">MAAADELAFHEFEEATNLLAETPDAATTSQSDELTSREHVAVVVGSGIGYGAEVGEEEDDKTSLLQEEKPQPRFWTFDYYQSFFDVDTSQVLDRIKGSLLPHPGHNFVRHHLRNRPDLYGPFWICATLAFVLAVTGNLTLVLAQRRDPSIHYSPQFHKVTIAGITIYCYAWLVPLALWGFLRWRQGTRERMGLYTFLETVCVYGYSLFVFIPTVVLWLIPVQWIQWLFGALGLALSAAGLVFTLWPVVREDTRLVAAALLSTVVLLHALLALGCKLYFFQPLPLDHVVPAPQATPPSPNVLLPSSIQPMTTS</sequence>
<accession>Q99LP8</accession>
<accession>Q99LF3</accession>